<dbReference type="EC" id="7.3.2.1" evidence="1"/>
<dbReference type="EMBL" id="CP000089">
    <property type="protein sequence ID" value="AAZ48294.1"/>
    <property type="molecule type" value="Genomic_DNA"/>
</dbReference>
<dbReference type="SMR" id="Q47A37"/>
<dbReference type="STRING" id="159087.Daro_3565"/>
<dbReference type="KEGG" id="dar:Daro_3565"/>
<dbReference type="eggNOG" id="COG1117">
    <property type="taxonomic scope" value="Bacteria"/>
</dbReference>
<dbReference type="HOGENOM" id="CLU_000604_1_22_4"/>
<dbReference type="OrthoDB" id="9802264at2"/>
<dbReference type="GO" id="GO:0005886">
    <property type="term" value="C:plasma membrane"/>
    <property type="evidence" value="ECO:0007669"/>
    <property type="project" value="UniProtKB-SubCell"/>
</dbReference>
<dbReference type="GO" id="GO:0005524">
    <property type="term" value="F:ATP binding"/>
    <property type="evidence" value="ECO:0007669"/>
    <property type="project" value="UniProtKB-KW"/>
</dbReference>
<dbReference type="GO" id="GO:0016887">
    <property type="term" value="F:ATP hydrolysis activity"/>
    <property type="evidence" value="ECO:0007669"/>
    <property type="project" value="InterPro"/>
</dbReference>
<dbReference type="GO" id="GO:0015415">
    <property type="term" value="F:ATPase-coupled phosphate ion transmembrane transporter activity"/>
    <property type="evidence" value="ECO:0007669"/>
    <property type="project" value="UniProtKB-EC"/>
</dbReference>
<dbReference type="GO" id="GO:0035435">
    <property type="term" value="P:phosphate ion transmembrane transport"/>
    <property type="evidence" value="ECO:0007669"/>
    <property type="project" value="InterPro"/>
</dbReference>
<dbReference type="CDD" id="cd03260">
    <property type="entry name" value="ABC_PstB_phosphate_transporter"/>
    <property type="match status" value="1"/>
</dbReference>
<dbReference type="Gene3D" id="3.40.50.300">
    <property type="entry name" value="P-loop containing nucleotide triphosphate hydrolases"/>
    <property type="match status" value="1"/>
</dbReference>
<dbReference type="InterPro" id="IPR003593">
    <property type="entry name" value="AAA+_ATPase"/>
</dbReference>
<dbReference type="InterPro" id="IPR003439">
    <property type="entry name" value="ABC_transporter-like_ATP-bd"/>
</dbReference>
<dbReference type="InterPro" id="IPR017871">
    <property type="entry name" value="ABC_transporter-like_CS"/>
</dbReference>
<dbReference type="InterPro" id="IPR027417">
    <property type="entry name" value="P-loop_NTPase"/>
</dbReference>
<dbReference type="InterPro" id="IPR005670">
    <property type="entry name" value="PstB-like"/>
</dbReference>
<dbReference type="NCBIfam" id="TIGR00972">
    <property type="entry name" value="3a0107s01c2"/>
    <property type="match status" value="1"/>
</dbReference>
<dbReference type="PANTHER" id="PTHR43423">
    <property type="entry name" value="ABC TRANSPORTER I FAMILY MEMBER 17"/>
    <property type="match status" value="1"/>
</dbReference>
<dbReference type="PANTHER" id="PTHR43423:SF1">
    <property type="entry name" value="ABC TRANSPORTER I FAMILY MEMBER 17"/>
    <property type="match status" value="1"/>
</dbReference>
<dbReference type="Pfam" id="PF00005">
    <property type="entry name" value="ABC_tran"/>
    <property type="match status" value="1"/>
</dbReference>
<dbReference type="SMART" id="SM00382">
    <property type="entry name" value="AAA"/>
    <property type="match status" value="1"/>
</dbReference>
<dbReference type="SUPFAM" id="SSF52540">
    <property type="entry name" value="P-loop containing nucleoside triphosphate hydrolases"/>
    <property type="match status" value="1"/>
</dbReference>
<dbReference type="PROSITE" id="PS00211">
    <property type="entry name" value="ABC_TRANSPORTER_1"/>
    <property type="match status" value="1"/>
</dbReference>
<dbReference type="PROSITE" id="PS50893">
    <property type="entry name" value="ABC_TRANSPORTER_2"/>
    <property type="match status" value="1"/>
</dbReference>
<dbReference type="PROSITE" id="PS51238">
    <property type="entry name" value="PSTB"/>
    <property type="match status" value="1"/>
</dbReference>
<accession>Q47A37</accession>
<evidence type="ECO:0000255" key="1">
    <source>
        <dbReference type="HAMAP-Rule" id="MF_01702"/>
    </source>
</evidence>
<organism>
    <name type="scientific">Dechloromonas aromatica (strain RCB)</name>
    <dbReference type="NCBI Taxonomy" id="159087"/>
    <lineage>
        <taxon>Bacteria</taxon>
        <taxon>Pseudomonadati</taxon>
        <taxon>Pseudomonadota</taxon>
        <taxon>Betaproteobacteria</taxon>
        <taxon>Rhodocyclales</taxon>
        <taxon>Azonexaceae</taxon>
        <taxon>Dechloromonas</taxon>
    </lineage>
</organism>
<keyword id="KW-0067">ATP-binding</keyword>
<keyword id="KW-0997">Cell inner membrane</keyword>
<keyword id="KW-1003">Cell membrane</keyword>
<keyword id="KW-0472">Membrane</keyword>
<keyword id="KW-0547">Nucleotide-binding</keyword>
<keyword id="KW-0592">Phosphate transport</keyword>
<keyword id="KW-1278">Translocase</keyword>
<keyword id="KW-0813">Transport</keyword>
<gene>
    <name evidence="1" type="primary">pstB</name>
    <name type="ordered locus">Daro_3565</name>
</gene>
<protein>
    <recommendedName>
        <fullName evidence="1">Phosphate import ATP-binding protein PstB</fullName>
        <ecNumber evidence="1">7.3.2.1</ecNumber>
    </recommendedName>
    <alternativeName>
        <fullName evidence="1">ABC phosphate transporter</fullName>
    </alternativeName>
    <alternativeName>
        <fullName evidence="1">Phosphate-transporting ATPase</fullName>
    </alternativeName>
</protein>
<reference key="1">
    <citation type="journal article" date="2009" name="BMC Genomics">
        <title>Metabolic analysis of the soil microbe Dechloromonas aromatica str. RCB: indications of a surprisingly complex life-style and cryptic anaerobic pathways for aromatic degradation.</title>
        <authorList>
            <person name="Salinero K.K."/>
            <person name="Keller K."/>
            <person name="Feil W.S."/>
            <person name="Feil H."/>
            <person name="Trong S."/>
            <person name="Di Bartolo G."/>
            <person name="Lapidus A."/>
        </authorList>
    </citation>
    <scope>NUCLEOTIDE SEQUENCE [LARGE SCALE GENOMIC DNA]</scope>
    <source>
        <strain>RCB</strain>
    </source>
</reference>
<sequence length="259" mass="29455">MQIHDKPTLKAEARNLNFYYGEAKALKGINMPIYDKKVTALIGPSGCGKSTYLRSFNRMHDLYPGNRYEGEIRFFPDNTNLLSPEVDPIEVRMRVGMVFQKPNPFPKTIYENVAYGLRVRGENNKRALDDKVEHALRGAAIWDEVKDRLQDMAPNLSGGQQQRLCIARALATDPELLLFDEPTSALDPIATGAIEELVHELKKRVTILIVTHNMQQAARVSDYTAYMYLGELIEFGKTDEIFIKPQDKRTEDYITGRMG</sequence>
<proteinExistence type="inferred from homology"/>
<comment type="function">
    <text evidence="1">Part of the ABC transporter complex PstSACB involved in phosphate import. Responsible for energy coupling to the transport system.</text>
</comment>
<comment type="catalytic activity">
    <reaction evidence="1">
        <text>phosphate(out) + ATP + H2O = ADP + 2 phosphate(in) + H(+)</text>
        <dbReference type="Rhea" id="RHEA:24440"/>
        <dbReference type="ChEBI" id="CHEBI:15377"/>
        <dbReference type="ChEBI" id="CHEBI:15378"/>
        <dbReference type="ChEBI" id="CHEBI:30616"/>
        <dbReference type="ChEBI" id="CHEBI:43474"/>
        <dbReference type="ChEBI" id="CHEBI:456216"/>
        <dbReference type="EC" id="7.3.2.1"/>
    </reaction>
</comment>
<comment type="subunit">
    <text evidence="1">The complex is composed of two ATP-binding proteins (PstB), two transmembrane proteins (PstC and PstA) and a solute-binding protein (PstS).</text>
</comment>
<comment type="subcellular location">
    <subcellularLocation>
        <location evidence="1">Cell inner membrane</location>
        <topology evidence="1">Peripheral membrane protein</topology>
    </subcellularLocation>
</comment>
<comment type="similarity">
    <text evidence="1">Belongs to the ABC transporter superfamily. Phosphate importer (TC 3.A.1.7) family.</text>
</comment>
<feature type="chain" id="PRO_0000272444" description="Phosphate import ATP-binding protein PstB">
    <location>
        <begin position="1"/>
        <end position="259"/>
    </location>
</feature>
<feature type="domain" description="ABC transporter" evidence="1">
    <location>
        <begin position="11"/>
        <end position="254"/>
    </location>
</feature>
<feature type="binding site" evidence="1">
    <location>
        <begin position="43"/>
        <end position="50"/>
    </location>
    <ligand>
        <name>ATP</name>
        <dbReference type="ChEBI" id="CHEBI:30616"/>
    </ligand>
</feature>
<name>PSTB_DECAR</name>